<protein>
    <recommendedName>
        <fullName evidence="2">Large ribosomal subunit protein bL12</fullName>
    </recommendedName>
    <alternativeName>
        <fullName evidence="3">50S ribosomal protein L7/L12</fullName>
    </alternativeName>
</protein>
<feature type="initiator methionine" description="Removed" evidence="1">
    <location>
        <position position="1"/>
    </location>
</feature>
<feature type="chain" id="PRO_0000243495" description="Large ribosomal subunit protein bL12">
    <location>
        <begin position="2"/>
        <end position="121"/>
    </location>
</feature>
<reference key="1">
    <citation type="journal article" date="2005" name="Nucleic Acids Res.">
        <title>Genome dynamics and diversity of Shigella species, the etiologic agents of bacillary dysentery.</title>
        <authorList>
            <person name="Yang F."/>
            <person name="Yang J."/>
            <person name="Zhang X."/>
            <person name="Chen L."/>
            <person name="Jiang Y."/>
            <person name="Yan Y."/>
            <person name="Tang X."/>
            <person name="Wang J."/>
            <person name="Xiong Z."/>
            <person name="Dong J."/>
            <person name="Xue Y."/>
            <person name="Zhu Y."/>
            <person name="Xu X."/>
            <person name="Sun L."/>
            <person name="Chen S."/>
            <person name="Nie H."/>
            <person name="Peng J."/>
            <person name="Xu J."/>
            <person name="Wang Y."/>
            <person name="Yuan Z."/>
            <person name="Wen Y."/>
            <person name="Yao Z."/>
            <person name="Shen Y."/>
            <person name="Qiang B."/>
            <person name="Hou Y."/>
            <person name="Yu J."/>
            <person name="Jin Q."/>
        </authorList>
    </citation>
    <scope>NUCLEOTIDE SEQUENCE [LARGE SCALE GENOMIC DNA]</scope>
    <source>
        <strain>Ss046</strain>
    </source>
</reference>
<comment type="function">
    <text evidence="2">Forms part of the ribosomal stalk which helps the ribosome interact with GTP-bound translation factors. Is thus essential for accurate translation.</text>
</comment>
<comment type="subunit">
    <text evidence="2">Homodimer. Part of the ribosomal stalk of the 50S ribosomal subunit. Forms a multimeric L10(L12)X complex, where L10 forms an elongated spine to which 2 to 4 L12 dimers bind in a sequential fashion. Binds GTP-bound translation factors.</text>
</comment>
<comment type="similarity">
    <text evidence="2">Belongs to the bacterial ribosomal protein bL12 family.</text>
</comment>
<proteinExistence type="inferred from homology"/>
<dbReference type="EMBL" id="CP000038">
    <property type="protein sequence ID" value="AAZ90664.1"/>
    <property type="molecule type" value="Genomic_DNA"/>
</dbReference>
<dbReference type="RefSeq" id="WP_000028879.1">
    <property type="nucleotide sequence ID" value="NC_007384.1"/>
</dbReference>
<dbReference type="SMR" id="Q3YUZ8"/>
<dbReference type="GeneID" id="93777908"/>
<dbReference type="KEGG" id="ssn:SSON_4159"/>
<dbReference type="HOGENOM" id="CLU_086499_3_2_6"/>
<dbReference type="Proteomes" id="UP000002529">
    <property type="component" value="Chromosome"/>
</dbReference>
<dbReference type="GO" id="GO:0022625">
    <property type="term" value="C:cytosolic large ribosomal subunit"/>
    <property type="evidence" value="ECO:0007669"/>
    <property type="project" value="TreeGrafter"/>
</dbReference>
<dbReference type="GO" id="GO:0003729">
    <property type="term" value="F:mRNA binding"/>
    <property type="evidence" value="ECO:0007669"/>
    <property type="project" value="TreeGrafter"/>
</dbReference>
<dbReference type="GO" id="GO:0003735">
    <property type="term" value="F:structural constituent of ribosome"/>
    <property type="evidence" value="ECO:0007669"/>
    <property type="project" value="InterPro"/>
</dbReference>
<dbReference type="GO" id="GO:0006412">
    <property type="term" value="P:translation"/>
    <property type="evidence" value="ECO:0007669"/>
    <property type="project" value="UniProtKB-UniRule"/>
</dbReference>
<dbReference type="CDD" id="cd00387">
    <property type="entry name" value="Ribosomal_L7_L12"/>
    <property type="match status" value="1"/>
</dbReference>
<dbReference type="FunFam" id="1.20.5.710:FF:000001">
    <property type="entry name" value="50S ribosomal protein L7/L12"/>
    <property type="match status" value="1"/>
</dbReference>
<dbReference type="FunFam" id="3.30.1390.10:FF:000001">
    <property type="entry name" value="50S ribosomal protein L7/L12"/>
    <property type="match status" value="1"/>
</dbReference>
<dbReference type="Gene3D" id="3.30.1390.10">
    <property type="match status" value="1"/>
</dbReference>
<dbReference type="Gene3D" id="1.20.5.710">
    <property type="entry name" value="Single helix bin"/>
    <property type="match status" value="1"/>
</dbReference>
<dbReference type="HAMAP" id="MF_00368">
    <property type="entry name" value="Ribosomal_bL12"/>
    <property type="match status" value="1"/>
</dbReference>
<dbReference type="InterPro" id="IPR000206">
    <property type="entry name" value="Ribosomal_bL12"/>
</dbReference>
<dbReference type="InterPro" id="IPR013823">
    <property type="entry name" value="Ribosomal_bL12_C"/>
</dbReference>
<dbReference type="InterPro" id="IPR014719">
    <property type="entry name" value="Ribosomal_bL12_C/ClpS-like"/>
</dbReference>
<dbReference type="InterPro" id="IPR008932">
    <property type="entry name" value="Ribosomal_bL12_oligo"/>
</dbReference>
<dbReference type="InterPro" id="IPR036235">
    <property type="entry name" value="Ribosomal_bL12_oligo_N_sf"/>
</dbReference>
<dbReference type="NCBIfam" id="TIGR00855">
    <property type="entry name" value="L12"/>
    <property type="match status" value="1"/>
</dbReference>
<dbReference type="PANTHER" id="PTHR45987">
    <property type="entry name" value="39S RIBOSOMAL PROTEIN L12"/>
    <property type="match status" value="1"/>
</dbReference>
<dbReference type="PANTHER" id="PTHR45987:SF4">
    <property type="entry name" value="LARGE RIBOSOMAL SUBUNIT PROTEIN BL12M"/>
    <property type="match status" value="1"/>
</dbReference>
<dbReference type="Pfam" id="PF00542">
    <property type="entry name" value="Ribosomal_L12"/>
    <property type="match status" value="1"/>
</dbReference>
<dbReference type="Pfam" id="PF16320">
    <property type="entry name" value="Ribosomal_L12_N"/>
    <property type="match status" value="1"/>
</dbReference>
<dbReference type="SUPFAM" id="SSF54736">
    <property type="entry name" value="ClpS-like"/>
    <property type="match status" value="1"/>
</dbReference>
<dbReference type="SUPFAM" id="SSF48300">
    <property type="entry name" value="Ribosomal protein L7/12, oligomerisation (N-terminal) domain"/>
    <property type="match status" value="1"/>
</dbReference>
<keyword id="KW-1185">Reference proteome</keyword>
<keyword id="KW-0687">Ribonucleoprotein</keyword>
<keyword id="KW-0689">Ribosomal protein</keyword>
<name>RL7_SHISS</name>
<evidence type="ECO:0000250" key="1"/>
<evidence type="ECO:0000255" key="2">
    <source>
        <dbReference type="HAMAP-Rule" id="MF_00368"/>
    </source>
</evidence>
<evidence type="ECO:0000305" key="3"/>
<gene>
    <name evidence="2" type="primary">rplL</name>
    <name type="ordered locus">SSON_4159</name>
</gene>
<sequence length="121" mass="12311">MSITKDQIIEAVAAMSVMDVVELISAMEEKFGVSAAAAVAVAAGPVEAAEEKTEFDVILKAAGANKVAVIKAVRGATGLGLKEAKDLVESAPAALKEGVSKDDAEALKKSLEEAGAEVEVK</sequence>
<accession>Q3YUZ8</accession>
<organism>
    <name type="scientific">Shigella sonnei (strain Ss046)</name>
    <dbReference type="NCBI Taxonomy" id="300269"/>
    <lineage>
        <taxon>Bacteria</taxon>
        <taxon>Pseudomonadati</taxon>
        <taxon>Pseudomonadota</taxon>
        <taxon>Gammaproteobacteria</taxon>
        <taxon>Enterobacterales</taxon>
        <taxon>Enterobacteriaceae</taxon>
        <taxon>Shigella</taxon>
    </lineage>
</organism>